<feature type="chain" id="PRO_1000005766" description="Galactokinase">
    <location>
        <begin position="1"/>
        <end position="390"/>
    </location>
</feature>
<feature type="active site" description="Proton acceptor" evidence="1">
    <location>
        <position position="174"/>
    </location>
</feature>
<feature type="binding site" evidence="1">
    <location>
        <begin position="33"/>
        <end position="36"/>
    </location>
    <ligand>
        <name>substrate</name>
    </ligand>
</feature>
<feature type="binding site" evidence="1">
    <location>
        <position position="67"/>
    </location>
    <ligand>
        <name>ATP</name>
        <dbReference type="ChEBI" id="CHEBI:30616"/>
    </ligand>
</feature>
<feature type="binding site" evidence="1">
    <location>
        <begin position="124"/>
        <end position="130"/>
    </location>
    <ligand>
        <name>ATP</name>
        <dbReference type="ChEBI" id="CHEBI:30616"/>
    </ligand>
</feature>
<feature type="binding site" evidence="1">
    <location>
        <position position="130"/>
    </location>
    <ligand>
        <name>Mg(2+)</name>
        <dbReference type="ChEBI" id="CHEBI:18420"/>
    </ligand>
</feature>
<feature type="binding site" evidence="1">
    <location>
        <position position="162"/>
    </location>
    <ligand>
        <name>Mg(2+)</name>
        <dbReference type="ChEBI" id="CHEBI:18420"/>
    </ligand>
</feature>
<feature type="binding site" evidence="1">
    <location>
        <position position="224"/>
    </location>
    <ligand>
        <name>substrate</name>
    </ligand>
</feature>
<feature type="site" description="Transition state stabilizer" evidence="1">
    <location>
        <position position="27"/>
    </location>
</feature>
<comment type="function">
    <text evidence="1">Catalyzes the transfer of the gamma-phosphate of ATP to D-galactose to form alpha-D-galactose-1-phosphate (Gal-1-P).</text>
</comment>
<comment type="catalytic activity">
    <reaction evidence="1">
        <text>alpha-D-galactose + ATP = alpha-D-galactose 1-phosphate + ADP + H(+)</text>
        <dbReference type="Rhea" id="RHEA:13553"/>
        <dbReference type="ChEBI" id="CHEBI:15378"/>
        <dbReference type="ChEBI" id="CHEBI:28061"/>
        <dbReference type="ChEBI" id="CHEBI:30616"/>
        <dbReference type="ChEBI" id="CHEBI:58336"/>
        <dbReference type="ChEBI" id="CHEBI:456216"/>
        <dbReference type="EC" id="2.7.1.6"/>
    </reaction>
</comment>
<comment type="pathway">
    <text evidence="1">Carbohydrate metabolism; galactose metabolism.</text>
</comment>
<comment type="subcellular location">
    <subcellularLocation>
        <location evidence="1">Cytoplasm</location>
    </subcellularLocation>
</comment>
<comment type="similarity">
    <text evidence="1">Belongs to the GHMP kinase family. GalK subfamily.</text>
</comment>
<reference key="1">
    <citation type="journal article" date="2007" name="PLoS ONE">
        <title>A glimpse of streptococcal toxic shock syndrome from comparative genomics of S. suis 2 Chinese isolates.</title>
        <authorList>
            <person name="Chen C."/>
            <person name="Tang J."/>
            <person name="Dong W."/>
            <person name="Wang C."/>
            <person name="Feng Y."/>
            <person name="Wang J."/>
            <person name="Zheng F."/>
            <person name="Pan X."/>
            <person name="Liu D."/>
            <person name="Li M."/>
            <person name="Song Y."/>
            <person name="Zhu X."/>
            <person name="Sun H."/>
            <person name="Feng T."/>
            <person name="Guo Z."/>
            <person name="Ju A."/>
            <person name="Ge J."/>
            <person name="Dong Y."/>
            <person name="Sun W."/>
            <person name="Jiang Y."/>
            <person name="Wang J."/>
            <person name="Yan J."/>
            <person name="Yang H."/>
            <person name="Wang X."/>
            <person name="Gao G.F."/>
            <person name="Yang R."/>
            <person name="Wang J."/>
            <person name="Yu J."/>
        </authorList>
    </citation>
    <scope>NUCLEOTIDE SEQUENCE [LARGE SCALE GENOMIC DNA]</scope>
    <source>
        <strain>05ZYH33</strain>
    </source>
</reference>
<gene>
    <name evidence="1" type="primary">galK</name>
    <name type="ordered locus">SSU05_0360</name>
</gene>
<organism>
    <name type="scientific">Streptococcus suis (strain 05ZYH33)</name>
    <dbReference type="NCBI Taxonomy" id="391295"/>
    <lineage>
        <taxon>Bacteria</taxon>
        <taxon>Bacillati</taxon>
        <taxon>Bacillota</taxon>
        <taxon>Bacilli</taxon>
        <taxon>Lactobacillales</taxon>
        <taxon>Streptococcaceae</taxon>
        <taxon>Streptococcus</taxon>
    </lineage>
</organism>
<name>GAL1_STRSY</name>
<evidence type="ECO:0000255" key="1">
    <source>
        <dbReference type="HAMAP-Rule" id="MF_00246"/>
    </source>
</evidence>
<dbReference type="EC" id="2.7.1.6" evidence="1"/>
<dbReference type="EMBL" id="CP000407">
    <property type="protein sequence ID" value="ABP89327.1"/>
    <property type="molecule type" value="Genomic_DNA"/>
</dbReference>
<dbReference type="SMR" id="A4VT88"/>
<dbReference type="STRING" id="391295.SSU05_0360"/>
<dbReference type="KEGG" id="ssu:SSU05_0360"/>
<dbReference type="eggNOG" id="COG0153">
    <property type="taxonomic scope" value="Bacteria"/>
</dbReference>
<dbReference type="HOGENOM" id="CLU_017814_2_1_9"/>
<dbReference type="UniPathway" id="UPA00214"/>
<dbReference type="GO" id="GO:0005829">
    <property type="term" value="C:cytosol"/>
    <property type="evidence" value="ECO:0007669"/>
    <property type="project" value="TreeGrafter"/>
</dbReference>
<dbReference type="GO" id="GO:0005524">
    <property type="term" value="F:ATP binding"/>
    <property type="evidence" value="ECO:0007669"/>
    <property type="project" value="UniProtKB-UniRule"/>
</dbReference>
<dbReference type="GO" id="GO:0004335">
    <property type="term" value="F:galactokinase activity"/>
    <property type="evidence" value="ECO:0007669"/>
    <property type="project" value="UniProtKB-UniRule"/>
</dbReference>
<dbReference type="GO" id="GO:0000287">
    <property type="term" value="F:magnesium ion binding"/>
    <property type="evidence" value="ECO:0007669"/>
    <property type="project" value="UniProtKB-UniRule"/>
</dbReference>
<dbReference type="GO" id="GO:0006012">
    <property type="term" value="P:galactose metabolic process"/>
    <property type="evidence" value="ECO:0007669"/>
    <property type="project" value="UniProtKB-UniRule"/>
</dbReference>
<dbReference type="FunFam" id="3.30.230.10:FF:000017">
    <property type="entry name" value="Galactokinase"/>
    <property type="match status" value="1"/>
</dbReference>
<dbReference type="FunFam" id="3.30.70.890:FF:000001">
    <property type="entry name" value="Galactokinase"/>
    <property type="match status" value="1"/>
</dbReference>
<dbReference type="Gene3D" id="3.30.230.10">
    <property type="match status" value="1"/>
</dbReference>
<dbReference type="Gene3D" id="3.30.70.890">
    <property type="entry name" value="GHMP kinase, C-terminal domain"/>
    <property type="match status" value="1"/>
</dbReference>
<dbReference type="HAMAP" id="MF_00246">
    <property type="entry name" value="Galactokinase"/>
    <property type="match status" value="1"/>
</dbReference>
<dbReference type="InterPro" id="IPR000705">
    <property type="entry name" value="Galactokinase"/>
</dbReference>
<dbReference type="InterPro" id="IPR022963">
    <property type="entry name" value="Galactokinase_bac"/>
</dbReference>
<dbReference type="InterPro" id="IPR019741">
    <property type="entry name" value="Galactokinase_CS"/>
</dbReference>
<dbReference type="InterPro" id="IPR019539">
    <property type="entry name" value="GalKase_N"/>
</dbReference>
<dbReference type="InterPro" id="IPR013750">
    <property type="entry name" value="GHMP_kinase_C_dom"/>
</dbReference>
<dbReference type="InterPro" id="IPR036554">
    <property type="entry name" value="GHMP_kinase_C_sf"/>
</dbReference>
<dbReference type="InterPro" id="IPR006204">
    <property type="entry name" value="GHMP_kinase_N_dom"/>
</dbReference>
<dbReference type="InterPro" id="IPR006203">
    <property type="entry name" value="GHMP_knse_ATP-bd_CS"/>
</dbReference>
<dbReference type="InterPro" id="IPR006206">
    <property type="entry name" value="Mevalonate/galactokinase"/>
</dbReference>
<dbReference type="InterPro" id="IPR020568">
    <property type="entry name" value="Ribosomal_Su5_D2-typ_SF"/>
</dbReference>
<dbReference type="InterPro" id="IPR014721">
    <property type="entry name" value="Ribsml_uS5_D2-typ_fold_subgr"/>
</dbReference>
<dbReference type="NCBIfam" id="TIGR00131">
    <property type="entry name" value="gal_kin"/>
    <property type="match status" value="1"/>
</dbReference>
<dbReference type="NCBIfam" id="NF003705">
    <property type="entry name" value="PRK05322.1"/>
    <property type="match status" value="1"/>
</dbReference>
<dbReference type="PANTHER" id="PTHR10457:SF7">
    <property type="entry name" value="GALACTOKINASE-RELATED"/>
    <property type="match status" value="1"/>
</dbReference>
<dbReference type="PANTHER" id="PTHR10457">
    <property type="entry name" value="MEVALONATE KINASE/GALACTOKINASE"/>
    <property type="match status" value="1"/>
</dbReference>
<dbReference type="Pfam" id="PF10509">
    <property type="entry name" value="GalKase_gal_bdg"/>
    <property type="match status" value="1"/>
</dbReference>
<dbReference type="Pfam" id="PF08544">
    <property type="entry name" value="GHMP_kinases_C"/>
    <property type="match status" value="1"/>
</dbReference>
<dbReference type="Pfam" id="PF00288">
    <property type="entry name" value="GHMP_kinases_N"/>
    <property type="match status" value="1"/>
</dbReference>
<dbReference type="PIRSF" id="PIRSF000530">
    <property type="entry name" value="Galactokinase"/>
    <property type="match status" value="1"/>
</dbReference>
<dbReference type="PRINTS" id="PR00473">
    <property type="entry name" value="GALCTOKINASE"/>
</dbReference>
<dbReference type="PRINTS" id="PR00959">
    <property type="entry name" value="MEVGALKINASE"/>
</dbReference>
<dbReference type="SUPFAM" id="SSF55060">
    <property type="entry name" value="GHMP Kinase, C-terminal domain"/>
    <property type="match status" value="1"/>
</dbReference>
<dbReference type="SUPFAM" id="SSF54211">
    <property type="entry name" value="Ribosomal protein S5 domain 2-like"/>
    <property type="match status" value="1"/>
</dbReference>
<dbReference type="PROSITE" id="PS00106">
    <property type="entry name" value="GALACTOKINASE"/>
    <property type="match status" value="1"/>
</dbReference>
<dbReference type="PROSITE" id="PS00627">
    <property type="entry name" value="GHMP_KINASES_ATP"/>
    <property type="match status" value="1"/>
</dbReference>
<sequence length="390" mass="43242">MNTEQLKQAFLDVFGQEADATFFSPGRINLIGEHTDYNGGHVFPAAITLGTYGAARKRDDQVLRFYSANFEELGIIEVDLNNLVFDKADNWTNYAKGVLKFLKEAGHVIDTGMEVFVYGNIPNGSGLSSSASLELLIGIIAEELYGLELTRLDLVKIGKQTENHFIGVNSGIMDQFAIGMGADNRAIYLDTNSLEYELVPLDLGDHVIVIMNTNKRRELADSKYNERRAECEKAVEELNAVLNIQTLGELDEWTFDQYSYLIKDENRIKRARHAVLENQRTLQARKALEEGDLATFGRLVNASHVSLEHDYEVTGLELDTLAHTAWEQEGVLGARMTGAGFGGCGIAIVHKDKVEAFKENVGKTYTEVVGYAPSFYVAEIAGGSRVLSRK</sequence>
<accession>A4VT88</accession>
<keyword id="KW-0067">ATP-binding</keyword>
<keyword id="KW-0119">Carbohydrate metabolism</keyword>
<keyword id="KW-0963">Cytoplasm</keyword>
<keyword id="KW-0299">Galactose metabolism</keyword>
<keyword id="KW-0418">Kinase</keyword>
<keyword id="KW-0460">Magnesium</keyword>
<keyword id="KW-0479">Metal-binding</keyword>
<keyword id="KW-0547">Nucleotide-binding</keyword>
<keyword id="KW-0808">Transferase</keyword>
<protein>
    <recommendedName>
        <fullName evidence="1">Galactokinase</fullName>
        <ecNumber evidence="1">2.7.1.6</ecNumber>
    </recommendedName>
    <alternativeName>
        <fullName evidence="1">Galactose kinase</fullName>
    </alternativeName>
</protein>
<proteinExistence type="inferred from homology"/>